<gene>
    <name evidence="1" type="primary">rpmD</name>
    <name type="ordered locus">SEN3250</name>
</gene>
<dbReference type="EMBL" id="AM933172">
    <property type="protein sequence ID" value="CAR34825.1"/>
    <property type="molecule type" value="Genomic_DNA"/>
</dbReference>
<dbReference type="RefSeq" id="WP_001140434.1">
    <property type="nucleotide sequence ID" value="NC_011294.1"/>
</dbReference>
<dbReference type="SMR" id="B5R1F9"/>
<dbReference type="GeneID" id="97393185"/>
<dbReference type="KEGG" id="set:SEN3250"/>
<dbReference type="HOGENOM" id="CLU_131047_1_4_6"/>
<dbReference type="Proteomes" id="UP000000613">
    <property type="component" value="Chromosome"/>
</dbReference>
<dbReference type="GO" id="GO:0022625">
    <property type="term" value="C:cytosolic large ribosomal subunit"/>
    <property type="evidence" value="ECO:0007669"/>
    <property type="project" value="TreeGrafter"/>
</dbReference>
<dbReference type="GO" id="GO:0003735">
    <property type="term" value="F:structural constituent of ribosome"/>
    <property type="evidence" value="ECO:0007669"/>
    <property type="project" value="InterPro"/>
</dbReference>
<dbReference type="GO" id="GO:0006412">
    <property type="term" value="P:translation"/>
    <property type="evidence" value="ECO:0007669"/>
    <property type="project" value="UniProtKB-UniRule"/>
</dbReference>
<dbReference type="CDD" id="cd01658">
    <property type="entry name" value="Ribosomal_L30"/>
    <property type="match status" value="1"/>
</dbReference>
<dbReference type="FunFam" id="3.30.1390.20:FF:000001">
    <property type="entry name" value="50S ribosomal protein L30"/>
    <property type="match status" value="1"/>
</dbReference>
<dbReference type="Gene3D" id="3.30.1390.20">
    <property type="entry name" value="Ribosomal protein L30, ferredoxin-like fold domain"/>
    <property type="match status" value="1"/>
</dbReference>
<dbReference type="HAMAP" id="MF_01371_B">
    <property type="entry name" value="Ribosomal_uL30_B"/>
    <property type="match status" value="1"/>
</dbReference>
<dbReference type="InterPro" id="IPR036919">
    <property type="entry name" value="Ribo_uL30_ferredoxin-like_sf"/>
</dbReference>
<dbReference type="InterPro" id="IPR005996">
    <property type="entry name" value="Ribosomal_uL30_bac-type"/>
</dbReference>
<dbReference type="InterPro" id="IPR018038">
    <property type="entry name" value="Ribosomal_uL30_CS"/>
</dbReference>
<dbReference type="InterPro" id="IPR016082">
    <property type="entry name" value="Ribosomal_uL30_ferredoxin-like"/>
</dbReference>
<dbReference type="NCBIfam" id="TIGR01308">
    <property type="entry name" value="rpmD_bact"/>
    <property type="match status" value="1"/>
</dbReference>
<dbReference type="PANTHER" id="PTHR15892:SF2">
    <property type="entry name" value="LARGE RIBOSOMAL SUBUNIT PROTEIN UL30M"/>
    <property type="match status" value="1"/>
</dbReference>
<dbReference type="PANTHER" id="PTHR15892">
    <property type="entry name" value="MITOCHONDRIAL RIBOSOMAL PROTEIN L30"/>
    <property type="match status" value="1"/>
</dbReference>
<dbReference type="Pfam" id="PF00327">
    <property type="entry name" value="Ribosomal_L30"/>
    <property type="match status" value="1"/>
</dbReference>
<dbReference type="PIRSF" id="PIRSF002211">
    <property type="entry name" value="Ribosomal_L30_bac-type"/>
    <property type="match status" value="1"/>
</dbReference>
<dbReference type="SUPFAM" id="SSF55129">
    <property type="entry name" value="Ribosomal protein L30p/L7e"/>
    <property type="match status" value="1"/>
</dbReference>
<dbReference type="PROSITE" id="PS00634">
    <property type="entry name" value="RIBOSOMAL_L30"/>
    <property type="match status" value="1"/>
</dbReference>
<comment type="subunit">
    <text evidence="1">Part of the 50S ribosomal subunit.</text>
</comment>
<comment type="similarity">
    <text evidence="1">Belongs to the universal ribosomal protein uL30 family.</text>
</comment>
<accession>B5R1F9</accession>
<protein>
    <recommendedName>
        <fullName evidence="1">Large ribosomal subunit protein uL30</fullName>
    </recommendedName>
    <alternativeName>
        <fullName evidence="2">50S ribosomal protein L30</fullName>
    </alternativeName>
</protein>
<name>RL30_SALEP</name>
<keyword id="KW-0687">Ribonucleoprotein</keyword>
<keyword id="KW-0689">Ribosomal protein</keyword>
<proteinExistence type="inferred from homology"/>
<reference key="1">
    <citation type="journal article" date="2008" name="Genome Res.">
        <title>Comparative genome analysis of Salmonella enteritidis PT4 and Salmonella gallinarum 287/91 provides insights into evolutionary and host adaptation pathways.</title>
        <authorList>
            <person name="Thomson N.R."/>
            <person name="Clayton D.J."/>
            <person name="Windhorst D."/>
            <person name="Vernikos G."/>
            <person name="Davidson S."/>
            <person name="Churcher C."/>
            <person name="Quail M.A."/>
            <person name="Stevens M."/>
            <person name="Jones M.A."/>
            <person name="Watson M."/>
            <person name="Barron A."/>
            <person name="Layton A."/>
            <person name="Pickard D."/>
            <person name="Kingsley R.A."/>
            <person name="Bignell A."/>
            <person name="Clark L."/>
            <person name="Harris B."/>
            <person name="Ormond D."/>
            <person name="Abdellah Z."/>
            <person name="Brooks K."/>
            <person name="Cherevach I."/>
            <person name="Chillingworth T."/>
            <person name="Woodward J."/>
            <person name="Norberczak H."/>
            <person name="Lord A."/>
            <person name="Arrowsmith C."/>
            <person name="Jagels K."/>
            <person name="Moule S."/>
            <person name="Mungall K."/>
            <person name="Saunders M."/>
            <person name="Whitehead S."/>
            <person name="Chabalgoity J.A."/>
            <person name="Maskell D."/>
            <person name="Humphreys T."/>
            <person name="Roberts M."/>
            <person name="Barrow P.A."/>
            <person name="Dougan G."/>
            <person name="Parkhill J."/>
        </authorList>
    </citation>
    <scope>NUCLEOTIDE SEQUENCE [LARGE SCALE GENOMIC DNA]</scope>
    <source>
        <strain>P125109</strain>
    </source>
</reference>
<sequence length="59" mass="6514">MAKTIKITQTRSAIGRLPKHKATLLGLGLRRIGHTVEREDTPAVRGMVNAVSFMVKVEE</sequence>
<evidence type="ECO:0000255" key="1">
    <source>
        <dbReference type="HAMAP-Rule" id="MF_01371"/>
    </source>
</evidence>
<evidence type="ECO:0000305" key="2"/>
<feature type="chain" id="PRO_1000144712" description="Large ribosomal subunit protein uL30">
    <location>
        <begin position="1"/>
        <end position="59"/>
    </location>
</feature>
<organism>
    <name type="scientific">Salmonella enteritidis PT4 (strain P125109)</name>
    <dbReference type="NCBI Taxonomy" id="550537"/>
    <lineage>
        <taxon>Bacteria</taxon>
        <taxon>Pseudomonadati</taxon>
        <taxon>Pseudomonadota</taxon>
        <taxon>Gammaproteobacteria</taxon>
        <taxon>Enterobacterales</taxon>
        <taxon>Enterobacteriaceae</taxon>
        <taxon>Salmonella</taxon>
    </lineage>
</organism>